<organism>
    <name type="scientific">Legionella pneumophila (strain Lens)</name>
    <dbReference type="NCBI Taxonomy" id="297245"/>
    <lineage>
        <taxon>Bacteria</taxon>
        <taxon>Pseudomonadati</taxon>
        <taxon>Pseudomonadota</taxon>
        <taxon>Gammaproteobacteria</taxon>
        <taxon>Legionellales</taxon>
        <taxon>Legionellaceae</taxon>
        <taxon>Legionella</taxon>
    </lineage>
</organism>
<feature type="chain" id="PRO_0000102682" description="Ribosome-binding factor A">
    <location>
        <begin position="1"/>
        <end position="123"/>
    </location>
</feature>
<sequence length="123" mass="13860">MNNNFKRTDRIAEMIQRKLALIIPQEIKDPRLKGFVTISAVKVAADLGHAKIYFTVLNEDKSVVTNILNGAASYLRSALARSITLRTVPQLHFIYDESIEYGQRLSRLIDEVNPPDSSSDDNN</sequence>
<reference key="1">
    <citation type="journal article" date="2004" name="Nat. Genet.">
        <title>Evidence in the Legionella pneumophila genome for exploitation of host cell functions and high genome plasticity.</title>
        <authorList>
            <person name="Cazalet C."/>
            <person name="Rusniok C."/>
            <person name="Brueggemann H."/>
            <person name="Zidane N."/>
            <person name="Magnier A."/>
            <person name="Ma L."/>
            <person name="Tichit M."/>
            <person name="Jarraud S."/>
            <person name="Bouchier C."/>
            <person name="Vandenesch F."/>
            <person name="Kunst F."/>
            <person name="Etienne J."/>
            <person name="Glaser P."/>
            <person name="Buchrieser C."/>
        </authorList>
    </citation>
    <scope>NUCLEOTIDE SEQUENCE [LARGE SCALE GENOMIC DNA]</scope>
    <source>
        <strain>Lens</strain>
    </source>
</reference>
<gene>
    <name evidence="1" type="primary">rbfA</name>
    <name type="ordered locus">lpl2688</name>
</gene>
<comment type="function">
    <text evidence="1">One of several proteins that assist in the late maturation steps of the functional core of the 30S ribosomal subunit. Associates with free 30S ribosomal subunits (but not with 30S subunits that are part of 70S ribosomes or polysomes). Required for efficient processing of 16S rRNA. May interact with the 5'-terminal helix region of 16S rRNA.</text>
</comment>
<comment type="subunit">
    <text evidence="1">Monomer. Binds 30S ribosomal subunits, but not 50S ribosomal subunits or 70S ribosomes.</text>
</comment>
<comment type="subcellular location">
    <subcellularLocation>
        <location evidence="1">Cytoplasm</location>
    </subcellularLocation>
</comment>
<comment type="similarity">
    <text evidence="1">Belongs to the RbfA family.</text>
</comment>
<keyword id="KW-0963">Cytoplasm</keyword>
<keyword id="KW-0690">Ribosome biogenesis</keyword>
<name>RBFA_LEGPL</name>
<protein>
    <recommendedName>
        <fullName evidence="1">Ribosome-binding factor A</fullName>
    </recommendedName>
</protein>
<accession>Q5WT37</accession>
<proteinExistence type="inferred from homology"/>
<dbReference type="EMBL" id="CR628337">
    <property type="protein sequence ID" value="CAH16929.1"/>
    <property type="molecule type" value="Genomic_DNA"/>
</dbReference>
<dbReference type="RefSeq" id="WP_011216620.1">
    <property type="nucleotide sequence ID" value="NC_006369.1"/>
</dbReference>
<dbReference type="SMR" id="Q5WT37"/>
<dbReference type="KEGG" id="lpf:lpl2688"/>
<dbReference type="LegioList" id="lpl2688"/>
<dbReference type="HOGENOM" id="CLU_089475_5_0_6"/>
<dbReference type="Proteomes" id="UP000002517">
    <property type="component" value="Chromosome"/>
</dbReference>
<dbReference type="GO" id="GO:0005829">
    <property type="term" value="C:cytosol"/>
    <property type="evidence" value="ECO:0007669"/>
    <property type="project" value="TreeGrafter"/>
</dbReference>
<dbReference type="GO" id="GO:0043024">
    <property type="term" value="F:ribosomal small subunit binding"/>
    <property type="evidence" value="ECO:0007669"/>
    <property type="project" value="TreeGrafter"/>
</dbReference>
<dbReference type="GO" id="GO:0030490">
    <property type="term" value="P:maturation of SSU-rRNA"/>
    <property type="evidence" value="ECO:0007669"/>
    <property type="project" value="UniProtKB-UniRule"/>
</dbReference>
<dbReference type="Gene3D" id="3.30.300.20">
    <property type="match status" value="1"/>
</dbReference>
<dbReference type="HAMAP" id="MF_00003">
    <property type="entry name" value="RbfA"/>
    <property type="match status" value="1"/>
</dbReference>
<dbReference type="InterPro" id="IPR015946">
    <property type="entry name" value="KH_dom-like_a/b"/>
</dbReference>
<dbReference type="InterPro" id="IPR000238">
    <property type="entry name" value="RbfA"/>
</dbReference>
<dbReference type="InterPro" id="IPR023799">
    <property type="entry name" value="RbfA_dom_sf"/>
</dbReference>
<dbReference type="InterPro" id="IPR020053">
    <property type="entry name" value="Ribosome-bd_factorA_CS"/>
</dbReference>
<dbReference type="NCBIfam" id="TIGR00082">
    <property type="entry name" value="rbfA"/>
    <property type="match status" value="1"/>
</dbReference>
<dbReference type="PANTHER" id="PTHR33515">
    <property type="entry name" value="RIBOSOME-BINDING FACTOR A, CHLOROPLASTIC-RELATED"/>
    <property type="match status" value="1"/>
</dbReference>
<dbReference type="PANTHER" id="PTHR33515:SF1">
    <property type="entry name" value="RIBOSOME-BINDING FACTOR A, CHLOROPLASTIC-RELATED"/>
    <property type="match status" value="1"/>
</dbReference>
<dbReference type="Pfam" id="PF02033">
    <property type="entry name" value="RBFA"/>
    <property type="match status" value="1"/>
</dbReference>
<dbReference type="SUPFAM" id="SSF89919">
    <property type="entry name" value="Ribosome-binding factor A, RbfA"/>
    <property type="match status" value="1"/>
</dbReference>
<dbReference type="PROSITE" id="PS01319">
    <property type="entry name" value="RBFA"/>
    <property type="match status" value="1"/>
</dbReference>
<evidence type="ECO:0000255" key="1">
    <source>
        <dbReference type="HAMAP-Rule" id="MF_00003"/>
    </source>
</evidence>